<feature type="chain" id="PRO_1000120346" description="GMP synthase [glutamine-hydrolyzing]">
    <location>
        <begin position="1"/>
        <end position="516"/>
    </location>
</feature>
<feature type="domain" description="Glutamine amidotransferase type-1" evidence="1">
    <location>
        <begin position="5"/>
        <end position="199"/>
    </location>
</feature>
<feature type="domain" description="GMPS ATP-PPase" evidence="1">
    <location>
        <begin position="200"/>
        <end position="391"/>
    </location>
</feature>
<feature type="active site" description="Nucleophile" evidence="1">
    <location>
        <position position="82"/>
    </location>
</feature>
<feature type="active site" evidence="1">
    <location>
        <position position="173"/>
    </location>
</feature>
<feature type="active site" evidence="1">
    <location>
        <position position="175"/>
    </location>
</feature>
<feature type="binding site" evidence="1">
    <location>
        <begin position="227"/>
        <end position="233"/>
    </location>
    <ligand>
        <name>ATP</name>
        <dbReference type="ChEBI" id="CHEBI:30616"/>
    </ligand>
</feature>
<protein>
    <recommendedName>
        <fullName evidence="1">GMP synthase [glutamine-hydrolyzing]</fullName>
        <ecNumber evidence="1">6.3.5.2</ecNumber>
    </recommendedName>
    <alternativeName>
        <fullName evidence="1">GMP synthetase</fullName>
    </alternativeName>
    <alternativeName>
        <fullName evidence="1">Glutamine amidotransferase</fullName>
    </alternativeName>
</protein>
<sequence length="516" mass="58055">MQEVPIVILDFGSQYTQLIARRLREVGVYCEIYPFFEPIENIRAKKPQGIILSGGPASVYEPDAPRVDKAIYELGIPVLGICYGMQLITVDFGGQVVRALEHEYGKAKLYFDPIHGKVCPLFEGTKDGQIVWMSHGDKVTELPAGFIRIAHTDNSPYAAIANEEKQIYALQFHPEVSHSQEGQKILENFARKICGITSKWDMGHFAKEQIEKIRQRVGEDKVLCALSGGVDSSVVTALLYEAIGDKLIPVFVDNGLLREGEREKVEYVFKNMLKVPLIVVDAKERFLNALQGITDPEQKRKIIGHTFIEVFEEEAKKHTDVKYLAQGTLYPDVIESVSVKGPSETIKSHHNVGGLPDWMKFELIEPLRELFKDEVRKLGLELGLPREMVYRHPFPGPGLAIRILGEVNEEALDLVRKADTILLEEIKAHGLYEKLWQSFAVLLNVKSVGVMGDKRTYENTVALRIVESSDGMTATFAHIPHDLLELISNRIINEVDGINRVVYDITSKPPGTIEWE</sequence>
<evidence type="ECO:0000255" key="1">
    <source>
        <dbReference type="HAMAP-Rule" id="MF_00344"/>
    </source>
</evidence>
<accession>A6Q4N8</accession>
<name>GUAA_NITSB</name>
<keyword id="KW-0067">ATP-binding</keyword>
<keyword id="KW-0315">Glutamine amidotransferase</keyword>
<keyword id="KW-0332">GMP biosynthesis</keyword>
<keyword id="KW-0436">Ligase</keyword>
<keyword id="KW-0547">Nucleotide-binding</keyword>
<keyword id="KW-0658">Purine biosynthesis</keyword>
<keyword id="KW-1185">Reference proteome</keyword>
<organism>
    <name type="scientific">Nitratiruptor sp. (strain SB155-2)</name>
    <dbReference type="NCBI Taxonomy" id="387092"/>
    <lineage>
        <taxon>Bacteria</taxon>
        <taxon>Pseudomonadati</taxon>
        <taxon>Campylobacterota</taxon>
        <taxon>Epsilonproteobacteria</taxon>
        <taxon>Nautiliales</taxon>
        <taxon>Nitratiruptoraceae</taxon>
        <taxon>Nitratiruptor</taxon>
    </lineage>
</organism>
<reference key="1">
    <citation type="journal article" date="2007" name="Proc. Natl. Acad. Sci. U.S.A.">
        <title>Deep-sea vent epsilon-proteobacterial genomes provide insights into emergence of pathogens.</title>
        <authorList>
            <person name="Nakagawa S."/>
            <person name="Takaki Y."/>
            <person name="Shimamura S."/>
            <person name="Reysenbach A.-L."/>
            <person name="Takai K."/>
            <person name="Horikoshi K."/>
        </authorList>
    </citation>
    <scope>NUCLEOTIDE SEQUENCE [LARGE SCALE GENOMIC DNA]</scope>
    <source>
        <strain>SB155-2</strain>
    </source>
</reference>
<comment type="function">
    <text evidence="1">Catalyzes the synthesis of GMP from XMP.</text>
</comment>
<comment type="catalytic activity">
    <reaction evidence="1">
        <text>XMP + L-glutamine + ATP + H2O = GMP + L-glutamate + AMP + diphosphate + 2 H(+)</text>
        <dbReference type="Rhea" id="RHEA:11680"/>
        <dbReference type="ChEBI" id="CHEBI:15377"/>
        <dbReference type="ChEBI" id="CHEBI:15378"/>
        <dbReference type="ChEBI" id="CHEBI:29985"/>
        <dbReference type="ChEBI" id="CHEBI:30616"/>
        <dbReference type="ChEBI" id="CHEBI:33019"/>
        <dbReference type="ChEBI" id="CHEBI:57464"/>
        <dbReference type="ChEBI" id="CHEBI:58115"/>
        <dbReference type="ChEBI" id="CHEBI:58359"/>
        <dbReference type="ChEBI" id="CHEBI:456215"/>
        <dbReference type="EC" id="6.3.5.2"/>
    </reaction>
</comment>
<comment type="pathway">
    <text evidence="1">Purine metabolism; GMP biosynthesis; GMP from XMP (L-Gln route): step 1/1.</text>
</comment>
<comment type="subunit">
    <text evidence="1">Homodimer.</text>
</comment>
<proteinExistence type="inferred from homology"/>
<dbReference type="EC" id="6.3.5.2" evidence="1"/>
<dbReference type="EMBL" id="AP009178">
    <property type="protein sequence ID" value="BAF70447.1"/>
    <property type="molecule type" value="Genomic_DNA"/>
</dbReference>
<dbReference type="RefSeq" id="WP_012082710.1">
    <property type="nucleotide sequence ID" value="NC_009662.1"/>
</dbReference>
<dbReference type="SMR" id="A6Q4N8"/>
<dbReference type="FunCoup" id="A6Q4N8">
    <property type="interactions" value="456"/>
</dbReference>
<dbReference type="STRING" id="387092.NIS_1339"/>
<dbReference type="KEGG" id="nis:NIS_1339"/>
<dbReference type="eggNOG" id="COG0518">
    <property type="taxonomic scope" value="Bacteria"/>
</dbReference>
<dbReference type="eggNOG" id="COG0519">
    <property type="taxonomic scope" value="Bacteria"/>
</dbReference>
<dbReference type="HOGENOM" id="CLU_014340_0_5_7"/>
<dbReference type="InParanoid" id="A6Q4N8"/>
<dbReference type="OrthoDB" id="9802219at2"/>
<dbReference type="UniPathway" id="UPA00189">
    <property type="reaction ID" value="UER00296"/>
</dbReference>
<dbReference type="Proteomes" id="UP000001118">
    <property type="component" value="Chromosome"/>
</dbReference>
<dbReference type="GO" id="GO:0005829">
    <property type="term" value="C:cytosol"/>
    <property type="evidence" value="ECO:0007669"/>
    <property type="project" value="TreeGrafter"/>
</dbReference>
<dbReference type="GO" id="GO:0005524">
    <property type="term" value="F:ATP binding"/>
    <property type="evidence" value="ECO:0007669"/>
    <property type="project" value="UniProtKB-UniRule"/>
</dbReference>
<dbReference type="GO" id="GO:0003921">
    <property type="term" value="F:GMP synthase activity"/>
    <property type="evidence" value="ECO:0007669"/>
    <property type="project" value="InterPro"/>
</dbReference>
<dbReference type="CDD" id="cd01742">
    <property type="entry name" value="GATase1_GMP_Synthase"/>
    <property type="match status" value="1"/>
</dbReference>
<dbReference type="CDD" id="cd01997">
    <property type="entry name" value="GMP_synthase_C"/>
    <property type="match status" value="1"/>
</dbReference>
<dbReference type="FunFam" id="3.30.300.10:FF:000002">
    <property type="entry name" value="GMP synthase [glutamine-hydrolyzing]"/>
    <property type="match status" value="1"/>
</dbReference>
<dbReference type="FunFam" id="3.40.50.620:FF:000001">
    <property type="entry name" value="GMP synthase [glutamine-hydrolyzing]"/>
    <property type="match status" value="1"/>
</dbReference>
<dbReference type="FunFam" id="3.40.50.880:FF:000001">
    <property type="entry name" value="GMP synthase [glutamine-hydrolyzing]"/>
    <property type="match status" value="1"/>
</dbReference>
<dbReference type="Gene3D" id="3.30.300.10">
    <property type="match status" value="1"/>
</dbReference>
<dbReference type="Gene3D" id="3.40.50.880">
    <property type="match status" value="1"/>
</dbReference>
<dbReference type="Gene3D" id="3.40.50.620">
    <property type="entry name" value="HUPs"/>
    <property type="match status" value="1"/>
</dbReference>
<dbReference type="HAMAP" id="MF_00344">
    <property type="entry name" value="GMP_synthase"/>
    <property type="match status" value="1"/>
</dbReference>
<dbReference type="InterPro" id="IPR029062">
    <property type="entry name" value="Class_I_gatase-like"/>
</dbReference>
<dbReference type="InterPro" id="IPR017926">
    <property type="entry name" value="GATASE"/>
</dbReference>
<dbReference type="InterPro" id="IPR001674">
    <property type="entry name" value="GMP_synth_C"/>
</dbReference>
<dbReference type="InterPro" id="IPR004739">
    <property type="entry name" value="GMP_synth_GATase"/>
</dbReference>
<dbReference type="InterPro" id="IPR022955">
    <property type="entry name" value="GMP_synthase"/>
</dbReference>
<dbReference type="InterPro" id="IPR025777">
    <property type="entry name" value="GMPS_ATP_PPase_dom"/>
</dbReference>
<dbReference type="InterPro" id="IPR014729">
    <property type="entry name" value="Rossmann-like_a/b/a_fold"/>
</dbReference>
<dbReference type="NCBIfam" id="TIGR00884">
    <property type="entry name" value="guaA_Cterm"/>
    <property type="match status" value="1"/>
</dbReference>
<dbReference type="NCBIfam" id="TIGR00888">
    <property type="entry name" value="guaA_Nterm"/>
    <property type="match status" value="1"/>
</dbReference>
<dbReference type="NCBIfam" id="NF000848">
    <property type="entry name" value="PRK00074.1"/>
    <property type="match status" value="1"/>
</dbReference>
<dbReference type="PANTHER" id="PTHR11922:SF2">
    <property type="entry name" value="GMP SYNTHASE [GLUTAMINE-HYDROLYZING]"/>
    <property type="match status" value="1"/>
</dbReference>
<dbReference type="PANTHER" id="PTHR11922">
    <property type="entry name" value="GMP SYNTHASE-RELATED"/>
    <property type="match status" value="1"/>
</dbReference>
<dbReference type="Pfam" id="PF00117">
    <property type="entry name" value="GATase"/>
    <property type="match status" value="1"/>
</dbReference>
<dbReference type="Pfam" id="PF00958">
    <property type="entry name" value="GMP_synt_C"/>
    <property type="match status" value="1"/>
</dbReference>
<dbReference type="PRINTS" id="PR00097">
    <property type="entry name" value="ANTSNTHASEII"/>
</dbReference>
<dbReference type="PRINTS" id="PR00099">
    <property type="entry name" value="CPSGATASE"/>
</dbReference>
<dbReference type="PRINTS" id="PR00096">
    <property type="entry name" value="GATASE"/>
</dbReference>
<dbReference type="SUPFAM" id="SSF52402">
    <property type="entry name" value="Adenine nucleotide alpha hydrolases-like"/>
    <property type="match status" value="1"/>
</dbReference>
<dbReference type="SUPFAM" id="SSF52317">
    <property type="entry name" value="Class I glutamine amidotransferase-like"/>
    <property type="match status" value="1"/>
</dbReference>
<dbReference type="SUPFAM" id="SSF54810">
    <property type="entry name" value="GMP synthetase C-terminal dimerisation domain"/>
    <property type="match status" value="1"/>
</dbReference>
<dbReference type="PROSITE" id="PS51273">
    <property type="entry name" value="GATASE_TYPE_1"/>
    <property type="match status" value="1"/>
</dbReference>
<dbReference type="PROSITE" id="PS51553">
    <property type="entry name" value="GMPS_ATP_PPASE"/>
    <property type="match status" value="1"/>
</dbReference>
<gene>
    <name evidence="1" type="primary">guaA</name>
    <name type="ordered locus">NIS_1339</name>
</gene>